<reference key="1">
    <citation type="submission" date="2005-11" db="EMBL/GenBank/DDBJ databases">
        <title>The complete genome sequence of Lawsonia intracellularis: the causative agent of proliferative enteropathy.</title>
        <authorList>
            <person name="Kaur K."/>
            <person name="Zhang Q."/>
            <person name="Beckler D."/>
            <person name="Munir S."/>
            <person name="Li L."/>
            <person name="Kinsley K."/>
            <person name="Herron L."/>
            <person name="Peterson A."/>
            <person name="May B."/>
            <person name="Singh S."/>
            <person name="Gebhart C."/>
            <person name="Kapur V."/>
        </authorList>
    </citation>
    <scope>NUCLEOTIDE SEQUENCE [LARGE SCALE GENOMIC DNA]</scope>
    <source>
        <strain>PHE/MN1-00</strain>
    </source>
</reference>
<proteinExistence type="inferred from homology"/>
<evidence type="ECO:0000255" key="1">
    <source>
        <dbReference type="HAMAP-Rule" id="MF_00019"/>
    </source>
</evidence>
<gene>
    <name evidence="1" type="primary">plsX</name>
    <name type="ordered locus">LI0163</name>
</gene>
<sequence>MLNSHSITIAIDAMGGDYGPSVVVPGAVKAAQITGAKIILVGNTPEIEDQLALLQVKNTKIEIVHASDVANMDEKPSDILRRKKNSSIQIACRLVKEGLANGIVSAGHSGASVACGMFIIGRITGVERPALASILPTEKNPLILLDVGATVDCKPYHLFQFGLMGHTFACDLLNIQSPRVGILSIGEEEGKGNTQVKEAYELLKMAKDINFTGNVEGRDLFTGNVDVTICDGFVGNVALKLSEGLSSSLSRVLRKELFSSGIFSKIGTFLAKNAFKNFSKLIDYAEYGGAPLLGLKGIFIVSHGSSNEKAICNATKMAVLFEQKETNKRLIDSIGLNEELTRFGHSC</sequence>
<protein>
    <recommendedName>
        <fullName evidence="1">Phosphate acyltransferase</fullName>
        <ecNumber evidence="1">2.3.1.274</ecNumber>
    </recommendedName>
    <alternativeName>
        <fullName evidence="1">Acyl-ACP phosphotransacylase</fullName>
    </alternativeName>
    <alternativeName>
        <fullName evidence="1">Acyl-[acyl-carrier-protein]--phosphate acyltransferase</fullName>
    </alternativeName>
    <alternativeName>
        <fullName evidence="1">Phosphate-acyl-ACP acyltransferase</fullName>
    </alternativeName>
</protein>
<dbReference type="EC" id="2.3.1.274" evidence="1"/>
<dbReference type="EMBL" id="AM180252">
    <property type="protein sequence ID" value="CAJ54219.1"/>
    <property type="molecule type" value="Genomic_DNA"/>
</dbReference>
<dbReference type="RefSeq" id="WP_011526245.1">
    <property type="nucleotide sequence ID" value="NC_008011.1"/>
</dbReference>
<dbReference type="SMR" id="Q1MS07"/>
<dbReference type="STRING" id="363253.LI0163"/>
<dbReference type="KEGG" id="lip:LI0163"/>
<dbReference type="eggNOG" id="COG0416">
    <property type="taxonomic scope" value="Bacteria"/>
</dbReference>
<dbReference type="HOGENOM" id="CLU_039379_1_0_7"/>
<dbReference type="OrthoDB" id="9806408at2"/>
<dbReference type="UniPathway" id="UPA00085"/>
<dbReference type="Proteomes" id="UP000002430">
    <property type="component" value="Chromosome"/>
</dbReference>
<dbReference type="GO" id="GO:0005737">
    <property type="term" value="C:cytoplasm"/>
    <property type="evidence" value="ECO:0007669"/>
    <property type="project" value="UniProtKB-SubCell"/>
</dbReference>
<dbReference type="GO" id="GO:0043811">
    <property type="term" value="F:phosphate:acyl-[acyl carrier protein] acyltransferase activity"/>
    <property type="evidence" value="ECO:0007669"/>
    <property type="project" value="UniProtKB-UniRule"/>
</dbReference>
<dbReference type="GO" id="GO:0006633">
    <property type="term" value="P:fatty acid biosynthetic process"/>
    <property type="evidence" value="ECO:0007669"/>
    <property type="project" value="UniProtKB-UniRule"/>
</dbReference>
<dbReference type="GO" id="GO:0008654">
    <property type="term" value="P:phospholipid biosynthetic process"/>
    <property type="evidence" value="ECO:0007669"/>
    <property type="project" value="UniProtKB-KW"/>
</dbReference>
<dbReference type="Gene3D" id="3.40.718.10">
    <property type="entry name" value="Isopropylmalate Dehydrogenase"/>
    <property type="match status" value="1"/>
</dbReference>
<dbReference type="HAMAP" id="MF_00019">
    <property type="entry name" value="PlsX"/>
    <property type="match status" value="1"/>
</dbReference>
<dbReference type="InterPro" id="IPR003664">
    <property type="entry name" value="FA_synthesis"/>
</dbReference>
<dbReference type="InterPro" id="IPR012281">
    <property type="entry name" value="Phospholipid_synth_PlsX-like"/>
</dbReference>
<dbReference type="NCBIfam" id="TIGR00182">
    <property type="entry name" value="plsX"/>
    <property type="match status" value="1"/>
</dbReference>
<dbReference type="PANTHER" id="PTHR30100">
    <property type="entry name" value="FATTY ACID/PHOSPHOLIPID SYNTHESIS PROTEIN PLSX"/>
    <property type="match status" value="1"/>
</dbReference>
<dbReference type="PANTHER" id="PTHR30100:SF1">
    <property type="entry name" value="PHOSPHATE ACYLTRANSFERASE"/>
    <property type="match status" value="1"/>
</dbReference>
<dbReference type="Pfam" id="PF02504">
    <property type="entry name" value="FA_synthesis"/>
    <property type="match status" value="1"/>
</dbReference>
<dbReference type="PIRSF" id="PIRSF002465">
    <property type="entry name" value="Phsphlp_syn_PlsX"/>
    <property type="match status" value="1"/>
</dbReference>
<dbReference type="SUPFAM" id="SSF53659">
    <property type="entry name" value="Isocitrate/Isopropylmalate dehydrogenase-like"/>
    <property type="match status" value="1"/>
</dbReference>
<name>PLSX_LAWIP</name>
<keyword id="KW-0963">Cytoplasm</keyword>
<keyword id="KW-0444">Lipid biosynthesis</keyword>
<keyword id="KW-0443">Lipid metabolism</keyword>
<keyword id="KW-0594">Phospholipid biosynthesis</keyword>
<keyword id="KW-1208">Phospholipid metabolism</keyword>
<keyword id="KW-1185">Reference proteome</keyword>
<keyword id="KW-0808">Transferase</keyword>
<organism>
    <name type="scientific">Lawsonia intracellularis (strain PHE/MN1-00)</name>
    <dbReference type="NCBI Taxonomy" id="363253"/>
    <lineage>
        <taxon>Bacteria</taxon>
        <taxon>Pseudomonadati</taxon>
        <taxon>Thermodesulfobacteriota</taxon>
        <taxon>Desulfovibrionia</taxon>
        <taxon>Desulfovibrionales</taxon>
        <taxon>Desulfovibrionaceae</taxon>
        <taxon>Lawsonia</taxon>
    </lineage>
</organism>
<accession>Q1MS07</accession>
<feature type="chain" id="PRO_0000329237" description="Phosphate acyltransferase">
    <location>
        <begin position="1"/>
        <end position="347"/>
    </location>
</feature>
<comment type="function">
    <text evidence="1">Catalyzes the reversible formation of acyl-phosphate (acyl-PO(4)) from acyl-[acyl-carrier-protein] (acyl-ACP). This enzyme utilizes acyl-ACP as fatty acyl donor, but not acyl-CoA.</text>
</comment>
<comment type="catalytic activity">
    <reaction evidence="1">
        <text>a fatty acyl-[ACP] + phosphate = an acyl phosphate + holo-[ACP]</text>
        <dbReference type="Rhea" id="RHEA:42292"/>
        <dbReference type="Rhea" id="RHEA-COMP:9685"/>
        <dbReference type="Rhea" id="RHEA-COMP:14125"/>
        <dbReference type="ChEBI" id="CHEBI:43474"/>
        <dbReference type="ChEBI" id="CHEBI:59918"/>
        <dbReference type="ChEBI" id="CHEBI:64479"/>
        <dbReference type="ChEBI" id="CHEBI:138651"/>
        <dbReference type="EC" id="2.3.1.274"/>
    </reaction>
</comment>
<comment type="pathway">
    <text evidence="1">Lipid metabolism; phospholipid metabolism.</text>
</comment>
<comment type="subunit">
    <text evidence="1">Homodimer. Probably interacts with PlsY.</text>
</comment>
<comment type="subcellular location">
    <subcellularLocation>
        <location evidence="1">Cytoplasm</location>
    </subcellularLocation>
    <text evidence="1">Associated with the membrane possibly through PlsY.</text>
</comment>
<comment type="similarity">
    <text evidence="1">Belongs to the PlsX family.</text>
</comment>